<name>FAR3_MANKU</name>
<comment type="function">
    <text evidence="1">FMRFamides and FMRFamide-like peptides are neuropeptides.</text>
</comment>
<comment type="subcellular location">
    <subcellularLocation>
        <location evidence="6">Secreted</location>
    </subcellularLocation>
</comment>
<comment type="similarity">
    <text evidence="2">Belongs to the FARP (FMRF amide related peptide) family.</text>
</comment>
<feature type="peptide" id="PRO_0000420774" description="Extended FMRFamide-3" evidence="3">
    <location>
        <begin position="1"/>
        <end position="9"/>
    </location>
</feature>
<feature type="modified residue" description="Leucine amide" evidence="3">
    <location>
        <position position="9"/>
    </location>
</feature>
<feature type="unsure residue" description="L or I" evidence="3">
    <location>
        <position position="7"/>
    </location>
</feature>
<feature type="unsure residue" description="L or I" evidence="3">
    <location>
        <position position="9"/>
    </location>
</feature>
<proteinExistence type="evidence at protein level"/>
<accession>B0M3C8</accession>
<sequence>GPESAFLRL</sequence>
<keyword id="KW-0027">Amidation</keyword>
<keyword id="KW-0903">Direct protein sequencing</keyword>
<keyword id="KW-0527">Neuropeptide</keyword>
<keyword id="KW-0964">Secreted</keyword>
<organism>
    <name type="scientific">Mantophasma kudubergense</name>
    <name type="common">Gladiator</name>
    <name type="synonym">Heel-walker</name>
    <dbReference type="NCBI Taxonomy" id="1037657"/>
    <lineage>
        <taxon>Eukaryota</taxon>
        <taxon>Metazoa</taxon>
        <taxon>Ecdysozoa</taxon>
        <taxon>Arthropoda</taxon>
        <taxon>Hexapoda</taxon>
        <taxon>Insecta</taxon>
        <taxon>Pterygota</taxon>
        <taxon>Neoptera</taxon>
        <taxon>Polyneoptera</taxon>
        <taxon>Mantophasmatodea</taxon>
        <taxon>Mantophasmatidae</taxon>
        <taxon>Mantophasma</taxon>
    </lineage>
</organism>
<dbReference type="GO" id="GO:0005576">
    <property type="term" value="C:extracellular region"/>
    <property type="evidence" value="ECO:0007669"/>
    <property type="project" value="UniProtKB-SubCell"/>
</dbReference>
<dbReference type="GO" id="GO:0007218">
    <property type="term" value="P:neuropeptide signaling pathway"/>
    <property type="evidence" value="ECO:0007669"/>
    <property type="project" value="UniProtKB-KW"/>
</dbReference>
<reference evidence="5" key="1">
    <citation type="journal article" date="2012" name="Syst. Biol.">
        <title>Peptidomics-based phylogeny and biogeography of Mantophasmatodea (Hexapoda).</title>
        <authorList>
            <person name="Predel R."/>
            <person name="Neupert S."/>
            <person name="Huetteroth W."/>
            <person name="Kahnt J."/>
            <person name="Waidelich D."/>
            <person name="Roth S."/>
        </authorList>
    </citation>
    <scope>PROTEIN SEQUENCE</scope>
    <scope>AMIDATION AT LEU-9</scope>
    <source>
        <tissue evidence="3">Thoracic perisympathetic organs</tissue>
    </source>
</reference>
<evidence type="ECO:0000250" key="1">
    <source>
        <dbReference type="UniProtKB" id="P34405"/>
    </source>
</evidence>
<evidence type="ECO:0000255" key="2"/>
<evidence type="ECO:0000269" key="3">
    <source>
    </source>
</evidence>
<evidence type="ECO:0000303" key="4">
    <source>
    </source>
</evidence>
<evidence type="ECO:0000305" key="5"/>
<evidence type="ECO:0000305" key="6">
    <source>
    </source>
</evidence>
<protein>
    <recommendedName>
        <fullName evidence="4">Extended FMRFamide-3</fullName>
        <shortName evidence="4">FMRFa-3</shortName>
    </recommendedName>
</protein>